<proteinExistence type="inferred from homology"/>
<organism>
    <name type="scientific">Leptospira biflexa serovar Patoc (strain Patoc 1 / Ames)</name>
    <dbReference type="NCBI Taxonomy" id="355278"/>
    <lineage>
        <taxon>Bacteria</taxon>
        <taxon>Pseudomonadati</taxon>
        <taxon>Spirochaetota</taxon>
        <taxon>Spirochaetia</taxon>
        <taxon>Leptospirales</taxon>
        <taxon>Leptospiraceae</taxon>
        <taxon>Leptospira</taxon>
    </lineage>
</organism>
<keyword id="KW-0963">Cytoplasm</keyword>
<keyword id="KW-0342">GTP-binding</keyword>
<keyword id="KW-0378">Hydrolase</keyword>
<keyword id="KW-0460">Magnesium</keyword>
<keyword id="KW-0479">Metal-binding</keyword>
<keyword id="KW-0547">Nucleotide-binding</keyword>
<keyword id="KW-0630">Potassium</keyword>
<keyword id="KW-0819">tRNA processing</keyword>
<evidence type="ECO:0000255" key="1">
    <source>
        <dbReference type="HAMAP-Rule" id="MF_00379"/>
    </source>
</evidence>
<gene>
    <name evidence="1" type="primary">mnmE</name>
    <name evidence="1" type="synonym">trmE</name>
    <name type="ordered locus">LBF_0281</name>
</gene>
<dbReference type="EC" id="3.6.-.-" evidence="1"/>
<dbReference type="EMBL" id="CP000777">
    <property type="protein sequence ID" value="ABZ92826.1"/>
    <property type="molecule type" value="Genomic_DNA"/>
</dbReference>
<dbReference type="RefSeq" id="WP_012387322.1">
    <property type="nucleotide sequence ID" value="NC_010842.1"/>
</dbReference>
<dbReference type="SMR" id="B0SAE4"/>
<dbReference type="KEGG" id="lbf:LBF_0281"/>
<dbReference type="HOGENOM" id="CLU_019624_4_1_12"/>
<dbReference type="GO" id="GO:0005829">
    <property type="term" value="C:cytosol"/>
    <property type="evidence" value="ECO:0007669"/>
    <property type="project" value="TreeGrafter"/>
</dbReference>
<dbReference type="GO" id="GO:0005525">
    <property type="term" value="F:GTP binding"/>
    <property type="evidence" value="ECO:0007669"/>
    <property type="project" value="UniProtKB-UniRule"/>
</dbReference>
<dbReference type="GO" id="GO:0003924">
    <property type="term" value="F:GTPase activity"/>
    <property type="evidence" value="ECO:0007669"/>
    <property type="project" value="UniProtKB-UniRule"/>
</dbReference>
<dbReference type="GO" id="GO:0046872">
    <property type="term" value="F:metal ion binding"/>
    <property type="evidence" value="ECO:0007669"/>
    <property type="project" value="UniProtKB-KW"/>
</dbReference>
<dbReference type="GO" id="GO:0030488">
    <property type="term" value="P:tRNA methylation"/>
    <property type="evidence" value="ECO:0007669"/>
    <property type="project" value="TreeGrafter"/>
</dbReference>
<dbReference type="GO" id="GO:0002098">
    <property type="term" value="P:tRNA wobble uridine modification"/>
    <property type="evidence" value="ECO:0007669"/>
    <property type="project" value="TreeGrafter"/>
</dbReference>
<dbReference type="CDD" id="cd04164">
    <property type="entry name" value="trmE"/>
    <property type="match status" value="1"/>
</dbReference>
<dbReference type="CDD" id="cd14858">
    <property type="entry name" value="TrmE_N"/>
    <property type="match status" value="1"/>
</dbReference>
<dbReference type="FunFam" id="3.40.50.300:FF:001376">
    <property type="entry name" value="tRNA modification GTPase MnmE"/>
    <property type="match status" value="1"/>
</dbReference>
<dbReference type="Gene3D" id="3.40.50.300">
    <property type="entry name" value="P-loop containing nucleotide triphosphate hydrolases"/>
    <property type="match status" value="1"/>
</dbReference>
<dbReference type="Gene3D" id="3.30.1360.120">
    <property type="entry name" value="Probable tRNA modification gtpase trme, domain 1"/>
    <property type="match status" value="1"/>
</dbReference>
<dbReference type="Gene3D" id="1.20.120.430">
    <property type="entry name" value="tRNA modification GTPase MnmE domain 2"/>
    <property type="match status" value="1"/>
</dbReference>
<dbReference type="HAMAP" id="MF_00379">
    <property type="entry name" value="GTPase_MnmE"/>
    <property type="match status" value="1"/>
</dbReference>
<dbReference type="InterPro" id="IPR031168">
    <property type="entry name" value="G_TrmE"/>
</dbReference>
<dbReference type="InterPro" id="IPR006073">
    <property type="entry name" value="GTP-bd"/>
</dbReference>
<dbReference type="InterPro" id="IPR018948">
    <property type="entry name" value="GTP-bd_TrmE_N"/>
</dbReference>
<dbReference type="InterPro" id="IPR004520">
    <property type="entry name" value="GTPase_MnmE"/>
</dbReference>
<dbReference type="InterPro" id="IPR027368">
    <property type="entry name" value="MnmE_dom2"/>
</dbReference>
<dbReference type="InterPro" id="IPR025867">
    <property type="entry name" value="MnmE_helical"/>
</dbReference>
<dbReference type="InterPro" id="IPR027417">
    <property type="entry name" value="P-loop_NTPase"/>
</dbReference>
<dbReference type="InterPro" id="IPR005225">
    <property type="entry name" value="Small_GTP-bd"/>
</dbReference>
<dbReference type="InterPro" id="IPR027266">
    <property type="entry name" value="TrmE/GcvT_dom1"/>
</dbReference>
<dbReference type="NCBIfam" id="TIGR00450">
    <property type="entry name" value="mnmE_trmE_thdF"/>
    <property type="match status" value="1"/>
</dbReference>
<dbReference type="NCBIfam" id="TIGR00231">
    <property type="entry name" value="small_GTP"/>
    <property type="match status" value="1"/>
</dbReference>
<dbReference type="PANTHER" id="PTHR42714">
    <property type="entry name" value="TRNA MODIFICATION GTPASE GTPBP3"/>
    <property type="match status" value="1"/>
</dbReference>
<dbReference type="PANTHER" id="PTHR42714:SF2">
    <property type="entry name" value="TRNA MODIFICATION GTPASE GTPBP3, MITOCHONDRIAL"/>
    <property type="match status" value="1"/>
</dbReference>
<dbReference type="Pfam" id="PF01926">
    <property type="entry name" value="MMR_HSR1"/>
    <property type="match status" value="1"/>
</dbReference>
<dbReference type="Pfam" id="PF12631">
    <property type="entry name" value="MnmE_helical"/>
    <property type="match status" value="1"/>
</dbReference>
<dbReference type="Pfam" id="PF10396">
    <property type="entry name" value="TrmE_N"/>
    <property type="match status" value="1"/>
</dbReference>
<dbReference type="SUPFAM" id="SSF52540">
    <property type="entry name" value="P-loop containing nucleoside triphosphate hydrolases"/>
    <property type="match status" value="1"/>
</dbReference>
<dbReference type="PROSITE" id="PS51709">
    <property type="entry name" value="G_TRME"/>
    <property type="match status" value="1"/>
</dbReference>
<reference key="1">
    <citation type="journal article" date="2008" name="PLoS ONE">
        <title>Genome sequence of the saprophyte Leptospira biflexa provides insights into the evolution of Leptospira and the pathogenesis of leptospirosis.</title>
        <authorList>
            <person name="Picardeau M."/>
            <person name="Bulach D.M."/>
            <person name="Bouchier C."/>
            <person name="Zuerner R.L."/>
            <person name="Zidane N."/>
            <person name="Wilson P.J."/>
            <person name="Creno S."/>
            <person name="Kuczek E.S."/>
            <person name="Bommezzadri S."/>
            <person name="Davis J.C."/>
            <person name="McGrath A."/>
            <person name="Johnson M.J."/>
            <person name="Boursaux-Eude C."/>
            <person name="Seemann T."/>
            <person name="Rouy Z."/>
            <person name="Coppel R.L."/>
            <person name="Rood J.I."/>
            <person name="Lajus A."/>
            <person name="Davies J.K."/>
            <person name="Medigue C."/>
            <person name="Adler B."/>
        </authorList>
    </citation>
    <scope>NUCLEOTIDE SEQUENCE [LARGE SCALE GENOMIC DNA]</scope>
    <source>
        <strain>Patoc 1 / Ames</strain>
    </source>
</reference>
<comment type="function">
    <text evidence="1">Exhibits a very high intrinsic GTPase hydrolysis rate. Involved in the addition of a carboxymethylaminomethyl (cmnm) group at the wobble position (U34) of certain tRNAs, forming tRNA-cmnm(5)s(2)U34.</text>
</comment>
<comment type="cofactor">
    <cofactor evidence="1">
        <name>K(+)</name>
        <dbReference type="ChEBI" id="CHEBI:29103"/>
    </cofactor>
    <text evidence="1">Binds 1 potassium ion per subunit.</text>
</comment>
<comment type="subunit">
    <text evidence="1">Homodimer. Heterotetramer of two MnmE and two MnmG subunits.</text>
</comment>
<comment type="subcellular location">
    <subcellularLocation>
        <location evidence="1">Cytoplasm</location>
    </subcellularLocation>
</comment>
<comment type="similarity">
    <text evidence="1">Belongs to the TRAFAC class TrmE-Era-EngA-EngB-Septin-like GTPase superfamily. TrmE GTPase family.</text>
</comment>
<protein>
    <recommendedName>
        <fullName evidence="1">tRNA modification GTPase MnmE</fullName>
        <ecNumber evidence="1">3.6.-.-</ecNumber>
    </recommendedName>
</protein>
<accession>B0SAE4</accession>
<sequence length="461" mass="51675">MIDTIAALSTAQGPGAIGILRVSGSLVMPIALAVLEKNQKPLTETFLQNQKRSAIFCDFVENGKPLDQIVFFYFPAPNSYTGEDLAEFHLHGNPLLLKRALHVLFEKGARPAQKGEFTKRAYMNGKINLSGAEAISRLIEARSKYELELAQKNVFGEITKLSSKIRSDLISLKAECEAEIDFSTEDLTFESLEERKNRMVALKNLCSKLIKDSERAESYILQSTVVLYGEPNTGKSSLMNLLIGKDRSIISDVPGTTRDYIAEELSLDGIPIRLVDTAGIRDTTDNIEQMGIERSKREADSANVKLFLIDTSLPFEKQSFLLKHKDRLFGSLIVANKIDSKHPSWHTESIHDIQEEFQLTISEISCKTKQGIPELLELLKSKLTSKDDTEDLVLLEDRQRYHIQKIESCLSEAIQLMENNAPAEIYIQEINVALHEIGQVNGVVENEEILGRIFSKFCVGK</sequence>
<feature type="chain" id="PRO_0000345820" description="tRNA modification GTPase MnmE">
    <location>
        <begin position="1"/>
        <end position="461"/>
    </location>
</feature>
<feature type="domain" description="TrmE-type G">
    <location>
        <begin position="222"/>
        <end position="384"/>
    </location>
</feature>
<feature type="binding site" evidence="1">
    <location>
        <position position="21"/>
    </location>
    <ligand>
        <name>(6S)-5-formyl-5,6,7,8-tetrahydrofolate</name>
        <dbReference type="ChEBI" id="CHEBI:57457"/>
    </ligand>
</feature>
<feature type="binding site" evidence="1">
    <location>
        <position position="87"/>
    </location>
    <ligand>
        <name>(6S)-5-formyl-5,6,7,8-tetrahydrofolate</name>
        <dbReference type="ChEBI" id="CHEBI:57457"/>
    </ligand>
</feature>
<feature type="binding site" evidence="1">
    <location>
        <position position="126"/>
    </location>
    <ligand>
        <name>(6S)-5-formyl-5,6,7,8-tetrahydrofolate</name>
        <dbReference type="ChEBI" id="CHEBI:57457"/>
    </ligand>
</feature>
<feature type="binding site" evidence="1">
    <location>
        <begin position="232"/>
        <end position="237"/>
    </location>
    <ligand>
        <name>GTP</name>
        <dbReference type="ChEBI" id="CHEBI:37565"/>
    </ligand>
</feature>
<feature type="binding site" evidence="1">
    <location>
        <position position="232"/>
    </location>
    <ligand>
        <name>K(+)</name>
        <dbReference type="ChEBI" id="CHEBI:29103"/>
    </ligand>
</feature>
<feature type="binding site" evidence="1">
    <location>
        <position position="236"/>
    </location>
    <ligand>
        <name>Mg(2+)</name>
        <dbReference type="ChEBI" id="CHEBI:18420"/>
    </ligand>
</feature>
<feature type="binding site" evidence="1">
    <location>
        <begin position="251"/>
        <end position="257"/>
    </location>
    <ligand>
        <name>GTP</name>
        <dbReference type="ChEBI" id="CHEBI:37565"/>
    </ligand>
</feature>
<feature type="binding site" evidence="1">
    <location>
        <position position="251"/>
    </location>
    <ligand>
        <name>K(+)</name>
        <dbReference type="ChEBI" id="CHEBI:29103"/>
    </ligand>
</feature>
<feature type="binding site" evidence="1">
    <location>
        <position position="253"/>
    </location>
    <ligand>
        <name>K(+)</name>
        <dbReference type="ChEBI" id="CHEBI:29103"/>
    </ligand>
</feature>
<feature type="binding site" evidence="1">
    <location>
        <position position="256"/>
    </location>
    <ligand>
        <name>K(+)</name>
        <dbReference type="ChEBI" id="CHEBI:29103"/>
    </ligand>
</feature>
<feature type="binding site" evidence="1">
    <location>
        <position position="257"/>
    </location>
    <ligand>
        <name>Mg(2+)</name>
        <dbReference type="ChEBI" id="CHEBI:18420"/>
    </ligand>
</feature>
<feature type="binding site" evidence="1">
    <location>
        <begin position="276"/>
        <end position="279"/>
    </location>
    <ligand>
        <name>GTP</name>
        <dbReference type="ChEBI" id="CHEBI:37565"/>
    </ligand>
</feature>
<feature type="binding site" evidence="1">
    <location>
        <position position="461"/>
    </location>
    <ligand>
        <name>(6S)-5-formyl-5,6,7,8-tetrahydrofolate</name>
        <dbReference type="ChEBI" id="CHEBI:57457"/>
    </ligand>
</feature>
<name>MNME_LEPBA</name>